<dbReference type="EC" id="2.1.3.15" evidence="1"/>
<dbReference type="EMBL" id="CP000521">
    <property type="protein sequence ID" value="ABO11057.2"/>
    <property type="molecule type" value="Genomic_DNA"/>
</dbReference>
<dbReference type="RefSeq" id="WP_000710403.1">
    <property type="nucleotide sequence ID" value="NZ_CP053098.1"/>
</dbReference>
<dbReference type="SMR" id="A3M2B3"/>
<dbReference type="KEGG" id="acb:A1S_0608"/>
<dbReference type="HOGENOM" id="CLU_015486_0_2_6"/>
<dbReference type="UniPathway" id="UPA00655">
    <property type="reaction ID" value="UER00711"/>
</dbReference>
<dbReference type="GO" id="GO:0009317">
    <property type="term" value="C:acetyl-CoA carboxylase complex"/>
    <property type="evidence" value="ECO:0007669"/>
    <property type="project" value="InterPro"/>
</dbReference>
<dbReference type="GO" id="GO:0003989">
    <property type="term" value="F:acetyl-CoA carboxylase activity"/>
    <property type="evidence" value="ECO:0007669"/>
    <property type="project" value="InterPro"/>
</dbReference>
<dbReference type="GO" id="GO:0005524">
    <property type="term" value="F:ATP binding"/>
    <property type="evidence" value="ECO:0007669"/>
    <property type="project" value="UniProtKB-KW"/>
</dbReference>
<dbReference type="GO" id="GO:0016743">
    <property type="term" value="F:carboxyl- or carbamoyltransferase activity"/>
    <property type="evidence" value="ECO:0007669"/>
    <property type="project" value="UniProtKB-UniRule"/>
</dbReference>
<dbReference type="GO" id="GO:0006633">
    <property type="term" value="P:fatty acid biosynthetic process"/>
    <property type="evidence" value="ECO:0007669"/>
    <property type="project" value="UniProtKB-KW"/>
</dbReference>
<dbReference type="GO" id="GO:2001295">
    <property type="term" value="P:malonyl-CoA biosynthetic process"/>
    <property type="evidence" value="ECO:0007669"/>
    <property type="project" value="UniProtKB-UniRule"/>
</dbReference>
<dbReference type="Gene3D" id="3.90.226.10">
    <property type="entry name" value="2-enoyl-CoA Hydratase, Chain A, domain 1"/>
    <property type="match status" value="1"/>
</dbReference>
<dbReference type="HAMAP" id="MF_00823">
    <property type="entry name" value="AcetylCoA_CT_alpha"/>
    <property type="match status" value="1"/>
</dbReference>
<dbReference type="InterPro" id="IPR001095">
    <property type="entry name" value="Acetyl_CoA_COase_a_su"/>
</dbReference>
<dbReference type="InterPro" id="IPR029045">
    <property type="entry name" value="ClpP/crotonase-like_dom_sf"/>
</dbReference>
<dbReference type="InterPro" id="IPR011763">
    <property type="entry name" value="COA_CT_C"/>
</dbReference>
<dbReference type="NCBIfam" id="TIGR00513">
    <property type="entry name" value="accA"/>
    <property type="match status" value="1"/>
</dbReference>
<dbReference type="NCBIfam" id="NF041504">
    <property type="entry name" value="AccA_sub"/>
    <property type="match status" value="1"/>
</dbReference>
<dbReference type="NCBIfam" id="NF004344">
    <property type="entry name" value="PRK05724.1"/>
    <property type="match status" value="1"/>
</dbReference>
<dbReference type="PANTHER" id="PTHR42853">
    <property type="entry name" value="ACETYL-COENZYME A CARBOXYLASE CARBOXYL TRANSFERASE SUBUNIT ALPHA"/>
    <property type="match status" value="1"/>
</dbReference>
<dbReference type="PANTHER" id="PTHR42853:SF3">
    <property type="entry name" value="ACETYL-COENZYME A CARBOXYLASE CARBOXYL TRANSFERASE SUBUNIT ALPHA, CHLOROPLASTIC"/>
    <property type="match status" value="1"/>
</dbReference>
<dbReference type="Pfam" id="PF03255">
    <property type="entry name" value="ACCA"/>
    <property type="match status" value="1"/>
</dbReference>
<dbReference type="PRINTS" id="PR01069">
    <property type="entry name" value="ACCCTRFRASEA"/>
</dbReference>
<dbReference type="SUPFAM" id="SSF52096">
    <property type="entry name" value="ClpP/crotonase"/>
    <property type="match status" value="1"/>
</dbReference>
<dbReference type="PROSITE" id="PS50989">
    <property type="entry name" value="COA_CT_CTER"/>
    <property type="match status" value="1"/>
</dbReference>
<proteinExistence type="inferred from homology"/>
<gene>
    <name evidence="1" type="primary">accA</name>
    <name type="ordered locus">A1S_0608</name>
</gene>
<comment type="function">
    <text evidence="1">Component of the acetyl coenzyme A carboxylase (ACC) complex. First, biotin carboxylase catalyzes the carboxylation of biotin on its carrier protein (BCCP) and then the CO(2) group is transferred by the carboxyltransferase to acetyl-CoA to form malonyl-CoA.</text>
</comment>
<comment type="catalytic activity">
    <reaction evidence="1">
        <text>N(6)-carboxybiotinyl-L-lysyl-[protein] + acetyl-CoA = N(6)-biotinyl-L-lysyl-[protein] + malonyl-CoA</text>
        <dbReference type="Rhea" id="RHEA:54728"/>
        <dbReference type="Rhea" id="RHEA-COMP:10505"/>
        <dbReference type="Rhea" id="RHEA-COMP:10506"/>
        <dbReference type="ChEBI" id="CHEBI:57288"/>
        <dbReference type="ChEBI" id="CHEBI:57384"/>
        <dbReference type="ChEBI" id="CHEBI:83144"/>
        <dbReference type="ChEBI" id="CHEBI:83145"/>
        <dbReference type="EC" id="2.1.3.15"/>
    </reaction>
</comment>
<comment type="pathway">
    <text evidence="1">Lipid metabolism; malonyl-CoA biosynthesis; malonyl-CoA from acetyl-CoA: step 1/1.</text>
</comment>
<comment type="subunit">
    <text evidence="1">Acetyl-CoA carboxylase is a heterohexamer composed of biotin carboxyl carrier protein (AccB), biotin carboxylase (AccC) and two subunits each of ACCase subunit alpha (AccA) and ACCase subunit beta (AccD).</text>
</comment>
<comment type="subcellular location">
    <subcellularLocation>
        <location evidence="1">Cytoplasm</location>
    </subcellularLocation>
</comment>
<comment type="similarity">
    <text evidence="1">Belongs to the AccA family.</text>
</comment>
<sequence length="273" mass="29673">MKKATQSKAWTTVQIARHPERPQFLDYVGEIFTEFDALHGDRLFGDDGAMVGGLARFDGQPVMVIGQHRGRSTREKLKHNFGMCNPEGYRKSQRLLDMAERFNLPVFTFIDTMGAYPGVGAEERGQAEAIATSLAQLSSLKVPVIATVLGEGGSGGALGIGVADRVIMLSHSIYSVISPEGCASILWKTAEKAAQASEALGLTADKLQSLGIVEYVVDEGEGAHLDPERVMQNLKVVLKQALDELLPMDANERCEARYQRLMKFGSENLGMAS</sequence>
<protein>
    <recommendedName>
        <fullName evidence="1">Acetyl-coenzyme A carboxylase carboxyl transferase subunit alpha</fullName>
        <shortName evidence="1">ACCase subunit alpha</shortName>
        <shortName evidence="1">Acetyl-CoA carboxylase carboxyltransferase subunit alpha</shortName>
        <ecNumber evidence="1">2.1.3.15</ecNumber>
    </recommendedName>
</protein>
<evidence type="ECO:0000255" key="1">
    <source>
        <dbReference type="HAMAP-Rule" id="MF_00823"/>
    </source>
</evidence>
<evidence type="ECO:0000255" key="2">
    <source>
        <dbReference type="PROSITE-ProRule" id="PRU01137"/>
    </source>
</evidence>
<accession>A3M2B3</accession>
<reference key="1">
    <citation type="journal article" date="2007" name="Genes Dev.">
        <title>New insights into Acinetobacter baumannii pathogenesis revealed by high-density pyrosequencing and transposon mutagenesis.</title>
        <authorList>
            <person name="Smith M.G."/>
            <person name="Gianoulis T.A."/>
            <person name="Pukatzki S."/>
            <person name="Mekalanos J.J."/>
            <person name="Ornston L.N."/>
            <person name="Gerstein M."/>
            <person name="Snyder M."/>
        </authorList>
    </citation>
    <scope>NUCLEOTIDE SEQUENCE [LARGE SCALE GENOMIC DNA]</scope>
    <source>
        <strain>ATCC 17978 / DSM 105126 / CIP 53.77 / LMG 1025 / NCDC KC755 / 5377</strain>
    </source>
</reference>
<feature type="chain" id="PRO_1000148724" description="Acetyl-coenzyme A carboxylase carboxyl transferase subunit alpha">
    <location>
        <begin position="1"/>
        <end position="273"/>
    </location>
</feature>
<feature type="domain" description="CoA carboxyltransferase C-terminal" evidence="2">
    <location>
        <begin position="1"/>
        <end position="244"/>
    </location>
</feature>
<keyword id="KW-0067">ATP-binding</keyword>
<keyword id="KW-0963">Cytoplasm</keyword>
<keyword id="KW-0275">Fatty acid biosynthesis</keyword>
<keyword id="KW-0276">Fatty acid metabolism</keyword>
<keyword id="KW-0444">Lipid biosynthesis</keyword>
<keyword id="KW-0443">Lipid metabolism</keyword>
<keyword id="KW-0547">Nucleotide-binding</keyword>
<keyword id="KW-0808">Transferase</keyword>
<name>ACCA_ACIBT</name>
<organism>
    <name type="scientific">Acinetobacter baumannii (strain ATCC 17978 / DSM 105126 / CIP 53.77 / LMG 1025 / NCDC KC755 / 5377)</name>
    <dbReference type="NCBI Taxonomy" id="400667"/>
    <lineage>
        <taxon>Bacteria</taxon>
        <taxon>Pseudomonadati</taxon>
        <taxon>Pseudomonadota</taxon>
        <taxon>Gammaproteobacteria</taxon>
        <taxon>Moraxellales</taxon>
        <taxon>Moraxellaceae</taxon>
        <taxon>Acinetobacter</taxon>
        <taxon>Acinetobacter calcoaceticus/baumannii complex</taxon>
    </lineage>
</organism>